<keyword id="KW-0002">3D-structure</keyword>
<keyword id="KW-1064">Adaptive immunity</keyword>
<keyword id="KW-1003">Cell membrane</keyword>
<keyword id="KW-1015">Disulfide bond</keyword>
<keyword id="KW-0325">Glycoprotein</keyword>
<keyword id="KW-0391">Immunity</keyword>
<keyword id="KW-0472">Membrane</keyword>
<keyword id="KW-0732">Signal</keyword>
<keyword id="KW-0812">Transmembrane</keyword>
<keyword id="KW-1133">Transmembrane helix</keyword>
<feature type="signal peptide" evidence="2">
    <location>
        <begin position="1"/>
        <end position="19"/>
    </location>
</feature>
<feature type="chain" id="PRO_0000447044" description="M1-specific T cell receptor alpha chain">
    <location>
        <begin position="20"/>
        <end position="268"/>
    </location>
</feature>
<feature type="transmembrane region" description="Helical" evidence="2">
    <location>
        <begin position="244"/>
        <end position="266"/>
    </location>
</feature>
<feature type="topological domain" description="Cytoplasmic" evidence="2">
    <location>
        <begin position="267"/>
        <end position="268"/>
    </location>
</feature>
<feature type="domain" description="Ig-like V-type" evidence="3">
    <location>
        <begin position="20"/>
        <end position="107"/>
    </location>
</feature>
<feature type="domain" description="Ig-like C1-type" evidence="3">
    <location>
        <begin position="147"/>
        <end position="235"/>
    </location>
</feature>
<feature type="region of interest" description="T cell receptor alpha variable 27" evidence="14">
    <location>
        <begin position="20"/>
        <end position="109"/>
    </location>
</feature>
<feature type="region of interest" description="CDR1" evidence="5 8 13">
    <location>
        <begin position="45"/>
        <end position="49"/>
    </location>
</feature>
<feature type="region of interest" description="CDR2" evidence="5 8 13">
    <location>
        <begin position="67"/>
        <end position="69"/>
    </location>
</feature>
<feature type="region of interest" description="CDR3" evidence="5 7 8 9 10">
    <location>
        <begin position="107"/>
        <end position="118"/>
    </location>
</feature>
<feature type="region of interest" description="T cell receptor alpha joining 42" evidence="14">
    <location>
        <begin position="110"/>
        <end position="128"/>
    </location>
</feature>
<feature type="region of interest" description="T cell receptor alpha constant" evidence="19">
    <location>
        <begin position="129"/>
        <end position="268"/>
    </location>
</feature>
<feature type="region of interest" description="Connecting peptide" evidence="1">
    <location>
        <begin position="222"/>
        <end position="243"/>
    </location>
</feature>
<feature type="glycosylation site" description="N-linked (GlcNAc...) asparagine" evidence="2">
    <location>
        <position position="36"/>
    </location>
</feature>
<feature type="glycosylation site" description="N-linked (GlcNAc...) asparagine" evidence="2">
    <location>
        <position position="42"/>
    </location>
</feature>
<feature type="glycosylation site" description="N-linked (GlcNAc...) asparagine" evidence="1 4">
    <location>
        <position position="160"/>
    </location>
</feature>
<feature type="glycosylation site" description="N-linked (GlcNAc...) asparagine" evidence="1 4">
    <location>
        <position position="194"/>
    </location>
</feature>
<feature type="glycosylation site" description="N-linked (GlcNAc...) asparagine" evidence="4">
    <location>
        <position position="205"/>
    </location>
</feature>
<feature type="glycosylation site" description="N-linked (GlcNAc...) asparagine" evidence="4">
    <location>
        <position position="241"/>
    </location>
</feature>
<feature type="disulfide bond" evidence="3 8">
    <location>
        <begin position="41"/>
        <end position="107"/>
    </location>
</feature>
<feature type="disulfide bond" evidence="1">
    <location>
        <begin position="150"/>
        <end position="200"/>
    </location>
</feature>
<feature type="disulfide bond" description="Interchain (with C-262 in TRBC2)" evidence="1">
    <location>
        <position position="222"/>
    </location>
</feature>
<feature type="sequence variant" id="VAR_081650" evidence="15 16 17 20">
    <original>G</original>
    <variation>A</variation>
    <location>
        <position position="110"/>
    </location>
</feature>
<feature type="mutagenesis site" description="Decreases the affinity for M/matrix protein 1 peptide antigen." evidence="6">
    <original>S</original>
    <variation>A</variation>
    <location>
        <position position="48"/>
    </location>
</feature>
<feature type="mutagenesis site" description="Decreases the affinity for M/matrix protein 1 peptide antigen." evidence="6">
    <original>S</original>
    <variation>A</variation>
    <location>
        <position position="49"/>
    </location>
</feature>
<feature type="mutagenesis site" description="Decreases the affinity for M/matrix protein 1 peptide antigen." evidence="6">
    <original>Q</original>
    <variation>A</variation>
    <location>
        <position position="51"/>
    </location>
</feature>
<feature type="sequence conflict" description="In Ref. 5; AC245470." evidence="12" ref="5">
    <original>P</original>
    <variation>T</variation>
    <location>
        <position position="99"/>
    </location>
</feature>
<organism>
    <name type="scientific">Homo sapiens</name>
    <name type="common">Human</name>
    <dbReference type="NCBI Taxonomy" id="9606"/>
    <lineage>
        <taxon>Eukaryota</taxon>
        <taxon>Metazoa</taxon>
        <taxon>Chordata</taxon>
        <taxon>Craniata</taxon>
        <taxon>Vertebrata</taxon>
        <taxon>Euteleostomi</taxon>
        <taxon>Mammalia</taxon>
        <taxon>Eutheria</taxon>
        <taxon>Euarchontoglires</taxon>
        <taxon>Primates</taxon>
        <taxon>Haplorrhini</taxon>
        <taxon>Catarrhini</taxon>
        <taxon>Hominidae</taxon>
        <taxon>Homo</taxon>
    </lineage>
</organism>
<dbReference type="EMBL" id="AAB20033">
    <property type="status" value="NOT_ANNOTATED_CDS"/>
    <property type="molecule type" value="mRNA"/>
</dbReference>
<dbReference type="EMBL" id="X02592">
    <property type="protein sequence ID" value="CAA26435.1"/>
    <property type="status" value="ALT_SEQ"/>
    <property type="molecule type" value="mRNA"/>
</dbReference>
<dbReference type="EMBL" id="AC245470">
    <property type="status" value="NOT_ANNOTATED_CDS"/>
    <property type="molecule type" value="Genomic_DNA"/>
</dbReference>
<dbReference type="EMBL" id="AC243965">
    <property type="status" value="NOT_ANNOTATED_CDS"/>
    <property type="molecule type" value="Genomic_DNA"/>
</dbReference>
<dbReference type="PDB" id="1OGA">
    <property type="method" value="X-ray"/>
    <property type="resolution" value="1.40 A"/>
</dbReference>
<dbReference type="PDB" id="2VLJ">
    <property type="method" value="X-ray"/>
    <property type="resolution" value="2.40 A"/>
</dbReference>
<dbReference type="PDB" id="2VLK">
    <property type="method" value="X-ray"/>
    <property type="resolution" value="2.50 A"/>
</dbReference>
<dbReference type="PDB" id="2VLR">
    <property type="method" value="X-ray"/>
    <property type="resolution" value="2.30 A"/>
</dbReference>
<dbReference type="PDB" id="5HHM">
    <property type="method" value="X-ray"/>
    <property type="resolution" value="2.50 A"/>
</dbReference>
<dbReference type="PDB" id="5HHO">
    <property type="method" value="X-ray"/>
    <property type="resolution" value="2.95 A"/>
</dbReference>
<dbReference type="PDBsum" id="1OGA"/>
<dbReference type="PDBsum" id="2VLJ"/>
<dbReference type="PDBsum" id="2VLK"/>
<dbReference type="PDBsum" id="2VLR"/>
<dbReference type="PDBsum" id="5HHM"/>
<dbReference type="PDBsum" id="5HHO"/>
<dbReference type="SMR" id="P0DSE1"/>
<dbReference type="GlyCosmos" id="P0DSE1">
    <property type="glycosylation" value="6 sites, No reported glycans"/>
</dbReference>
<dbReference type="AGR" id="HGNC:12027"/>
<dbReference type="GeneCards" id="TRA"/>
<dbReference type="HGNC" id="HGNC:12027">
    <property type="gene designation" value="TRA"/>
</dbReference>
<dbReference type="MalaCards" id="TRA"/>
<dbReference type="Orphanet" id="99861">
    <property type="disease" value="Precursor T-cell acute lymphoblastic leukemia"/>
</dbReference>
<dbReference type="ChiTaRS" id="TRA">
    <property type="organism name" value="human"/>
</dbReference>
<dbReference type="GO" id="GO:0009986">
    <property type="term" value="C:cell surface"/>
    <property type="evidence" value="ECO:0000314"/>
    <property type="project" value="UniProtKB"/>
</dbReference>
<dbReference type="GO" id="GO:0042101">
    <property type="term" value="C:T cell receptor complex"/>
    <property type="evidence" value="ECO:0000314"/>
    <property type="project" value="UniProtKB"/>
</dbReference>
<dbReference type="GO" id="GO:0002250">
    <property type="term" value="P:adaptive immune response"/>
    <property type="evidence" value="ECO:0000314"/>
    <property type="project" value="UniProtKB"/>
</dbReference>
<dbReference type="GO" id="GO:0002286">
    <property type="term" value="P:T cell activation involved in immune response"/>
    <property type="evidence" value="ECO:0000314"/>
    <property type="project" value="UniProtKB"/>
</dbReference>
<dbReference type="CDD" id="cd07688">
    <property type="entry name" value="IgC_TCR_alpha"/>
    <property type="match status" value="1"/>
</dbReference>
<dbReference type="CDD" id="cd04983">
    <property type="entry name" value="IgV_TCR_alpha"/>
    <property type="match status" value="1"/>
</dbReference>
<dbReference type="FunFam" id="2.60.40.10:FF:003018">
    <property type="entry name" value="T cell receptor alpha constant"/>
    <property type="match status" value="1"/>
</dbReference>
<dbReference type="Gene3D" id="2.60.40.10">
    <property type="entry name" value="Immunoglobulins"/>
    <property type="match status" value="2"/>
</dbReference>
<dbReference type="InterPro" id="IPR007110">
    <property type="entry name" value="Ig-like_dom"/>
</dbReference>
<dbReference type="InterPro" id="IPR036179">
    <property type="entry name" value="Ig-like_dom_sf"/>
</dbReference>
<dbReference type="InterPro" id="IPR013783">
    <property type="entry name" value="Ig-like_fold"/>
</dbReference>
<dbReference type="InterPro" id="IPR003599">
    <property type="entry name" value="Ig_sub"/>
</dbReference>
<dbReference type="InterPro" id="IPR013106">
    <property type="entry name" value="Ig_V-set"/>
</dbReference>
<dbReference type="InterPro" id="IPR015370">
    <property type="entry name" value="TCR_alpha_C"/>
</dbReference>
<dbReference type="InterPro" id="IPR052051">
    <property type="entry name" value="TCR_complex_component"/>
</dbReference>
<dbReference type="PANTHER" id="PTHR19433:SF72">
    <property type="entry name" value="T CELL RECEPTOR ALPHA CHAIN MC.7.G5-RELATED"/>
    <property type="match status" value="1"/>
</dbReference>
<dbReference type="PANTHER" id="PTHR19433">
    <property type="entry name" value="T-CELL RECEPTOR ALPHA CHAIN V REGION-RELATED"/>
    <property type="match status" value="1"/>
</dbReference>
<dbReference type="Pfam" id="PF09291">
    <property type="entry name" value="DUF1968"/>
    <property type="match status" value="1"/>
</dbReference>
<dbReference type="Pfam" id="PF07686">
    <property type="entry name" value="V-set"/>
    <property type="match status" value="1"/>
</dbReference>
<dbReference type="SMART" id="SM00409">
    <property type="entry name" value="IG"/>
    <property type="match status" value="1"/>
</dbReference>
<dbReference type="SMART" id="SM00406">
    <property type="entry name" value="IGv"/>
    <property type="match status" value="1"/>
</dbReference>
<dbReference type="SUPFAM" id="SSF48726">
    <property type="entry name" value="Immunoglobulin"/>
    <property type="match status" value="2"/>
</dbReference>
<dbReference type="PROSITE" id="PS50835">
    <property type="entry name" value="IG_LIKE"/>
    <property type="match status" value="1"/>
</dbReference>
<gene>
    <name evidence="21" type="primary">TRA</name>
</gene>
<reference key="1">
    <citation type="journal article" date="1991" name="Proc. Natl. Acad. Sci. U.S.A.">
        <title>Extensive conservation of alpha and beta chains of the human T-cell antigen receptor recognizing HLA-A2 and influenza A matrix peptide.</title>
        <authorList>
            <person name="Moss P.A."/>
            <person name="Moots R.J."/>
            <person name="Rosenberg W.M."/>
            <person name="Rowland-Jones S.J."/>
            <person name="Bodmer H.C."/>
            <person name="McMichael A.J."/>
            <person name="Bell J.I."/>
        </authorList>
    </citation>
    <scope>NUCLEOTIDE SEQUENCE [MRNA] OF 1-128</scope>
    <scope>CDR3 DOMAIN</scope>
    <scope>FUNCTION</scope>
</reference>
<reference key="2">
    <citation type="journal article" date="1995" name="J. Exp. Med.">
        <title>Human HLA-A0201-restricted cytotoxic T lymphocyte recognition of influenza A is dominated by T cells bearing the V beta 17 gene segment.</title>
        <authorList>
            <person name="Lehner P.J."/>
            <person name="Wang E.C."/>
            <person name="Moss P.A."/>
            <person name="Williams S."/>
            <person name="Platt K."/>
            <person name="Friedman S.M."/>
            <person name="Bell J.I."/>
            <person name="Borysiewicz L.K."/>
        </authorList>
    </citation>
    <scope>NUCLEOTIDE SEQUENCE [MRNA] OF 1-128</scope>
    <scope>CDR3 DOMAIN</scope>
    <scope>FUNCTION</scope>
    <scope>VARIANT ALA-110</scope>
</reference>
<reference key="3">
    <citation type="journal article" date="2018" name="Front. Immunol.">
        <title>Single-Cell Approach to Influenza-Specific CD8+ T Cell Receptor Repertoires Across Different Age Groups, Tissues, and Following Influenza Virus Infection.</title>
        <authorList>
            <person name="Sant S."/>
            <person name="Grzelak L."/>
            <person name="Wang Z."/>
            <person name="Pizzolla A."/>
            <person name="Koutsakos M."/>
            <person name="Crowe J."/>
            <person name="Loudovaris T."/>
            <person name="Mannering S.I."/>
            <person name="Westall G.P."/>
            <person name="Wakim L.M."/>
            <person name="Rossjohn J."/>
            <person name="Gras S."/>
            <person name="Richards M."/>
            <person name="Xu J."/>
            <person name="Thomas P.G."/>
            <person name="Loh L."/>
            <person name="Nguyen T.H.O."/>
            <person name="Kedzierska K."/>
        </authorList>
    </citation>
    <scope>NUCLEOTIDE SEQUENCE [MRNA] OF 1-128</scope>
    <scope>CDR3 DOMAIN</scope>
    <scope>FUNCTION</scope>
    <scope>TISSUE SPECIFICITY</scope>
    <scope>SUBCELLULAR LOCATION</scope>
</reference>
<reference key="4">
    <citation type="journal article" date="1985" name="EMBO J.">
        <title>The chromosomal location of T-cell receptor genes and a T cell rearranging gene: possible correlation with specific translocations in human T cell leukaemia.</title>
        <authorList>
            <person name="Rabbitts T.H."/>
            <person name="Lefranc M.P."/>
            <person name="Stinson M.A."/>
            <person name="Sims J.E."/>
            <person name="Schroder J."/>
            <person name="Steinmetz M."/>
            <person name="Spurr N.L."/>
            <person name="Solomon E."/>
            <person name="Goodfellow P.N."/>
        </authorList>
    </citation>
    <scope>NUCLEOTIDE SEQUENCE [MRNA] OF 129-268 (IMGT ALLELE TRAC*01)</scope>
</reference>
<reference key="5">
    <citation type="journal article" date="2003" name="Nature">
        <title>The DNA sequence and analysis of human chromosome 14.</title>
        <authorList>
            <person name="Heilig R."/>
            <person name="Eckenberg R."/>
            <person name="Petit J.-L."/>
            <person name="Fonknechten N."/>
            <person name="Da Silva C."/>
            <person name="Cattolico L."/>
            <person name="Levy M."/>
            <person name="Barbe V."/>
            <person name="De Berardinis V."/>
            <person name="Ureta-Vidal A."/>
            <person name="Pelletier E."/>
            <person name="Vico V."/>
            <person name="Anthouard V."/>
            <person name="Rowen L."/>
            <person name="Madan A."/>
            <person name="Qin S."/>
            <person name="Sun H."/>
            <person name="Du H."/>
            <person name="Pepin K."/>
            <person name="Artiguenave F."/>
            <person name="Robert C."/>
            <person name="Cruaud C."/>
            <person name="Bruels T."/>
            <person name="Jaillon O."/>
            <person name="Friedlander L."/>
            <person name="Samson G."/>
            <person name="Brottier P."/>
            <person name="Cure S."/>
            <person name="Segurens B."/>
            <person name="Aniere F."/>
            <person name="Samain S."/>
            <person name="Crespeau H."/>
            <person name="Abbasi N."/>
            <person name="Aiach N."/>
            <person name="Boscus D."/>
            <person name="Dickhoff R."/>
            <person name="Dors M."/>
            <person name="Dubois I."/>
            <person name="Friedman C."/>
            <person name="Gouyvenoux M."/>
            <person name="James R."/>
            <person name="Madan A."/>
            <person name="Mairey-Estrada B."/>
            <person name="Mangenot S."/>
            <person name="Martins N."/>
            <person name="Menard M."/>
            <person name="Oztas S."/>
            <person name="Ratcliffe A."/>
            <person name="Shaffer T."/>
            <person name="Trask B."/>
            <person name="Vacherie B."/>
            <person name="Bellemere C."/>
            <person name="Belser C."/>
            <person name="Besnard-Gonnet M."/>
            <person name="Bartol-Mavel D."/>
            <person name="Boutard M."/>
            <person name="Briez-Silla S."/>
            <person name="Combette S."/>
            <person name="Dufosse-Laurent V."/>
            <person name="Ferron C."/>
            <person name="Lechaplais C."/>
            <person name="Louesse C."/>
            <person name="Muselet D."/>
            <person name="Magdelenat G."/>
            <person name="Pateau E."/>
            <person name="Petit E."/>
            <person name="Sirvain-Trukniewicz P."/>
            <person name="Trybou A."/>
            <person name="Vega-Czarny N."/>
            <person name="Bataille E."/>
            <person name="Bluet E."/>
            <person name="Bordelais I."/>
            <person name="Dubois M."/>
            <person name="Dumont C."/>
            <person name="Guerin T."/>
            <person name="Haffray S."/>
            <person name="Hammadi R."/>
            <person name="Muanga J."/>
            <person name="Pellouin V."/>
            <person name="Robert D."/>
            <person name="Wunderle E."/>
            <person name="Gauguet G."/>
            <person name="Roy A."/>
            <person name="Sainte-Marthe L."/>
            <person name="Verdier J."/>
            <person name="Verdier-Discala C."/>
            <person name="Hillier L.W."/>
            <person name="Fulton L."/>
            <person name="McPherson J."/>
            <person name="Matsuda F."/>
            <person name="Wilson R."/>
            <person name="Scarpelli C."/>
            <person name="Gyapay G."/>
            <person name="Wincker P."/>
            <person name="Saurin W."/>
            <person name="Quetier F."/>
            <person name="Waterston R."/>
            <person name="Hood L."/>
            <person name="Weissenbach J."/>
        </authorList>
    </citation>
    <scope>NUCLEOTIDE SEQUENCE [LARGE SCALE GENOMIC DNA] (IMGT ALLELE TRAV27*03 AND IMGT ALLELE TRAJ42*01)</scope>
</reference>
<reference key="6">
    <citation type="journal article" date="1995" name="Immunogenetics">
        <title>Nomenclature for T-cell receptor (TCR) gene segments of the immune system.</title>
        <authorList>
            <consortium name="WHO-IUIS Nomenclature Sub-Committee on TCR Designation."/>
        </authorList>
    </citation>
    <scope>NOMENCLATURE</scope>
</reference>
<reference key="7">
    <citation type="journal article" date="2000" name="Exp. Clin. Immunogenet.">
        <title>Protein displays of the human T cell receptor alpha, beta, gamma and delta variable and joining regions.</title>
        <authorList>
            <person name="Folch G."/>
            <person name="Scaviner D."/>
            <person name="Contet V."/>
            <person name="Lefranc M.P."/>
        </authorList>
    </citation>
    <scope>CDR1 AND CDR2 DOMAINS</scope>
</reference>
<reference key="8">
    <citation type="book" date="2001" name="The T Cell Receptor FactsBook.">
        <title>The T Cell Receptor FactsBook.</title>
        <editorList>
            <person name="Lefranc M.P."/>
            <person name="Lefranc G."/>
        </editorList>
        <authorList>
            <person name="Lefranc M.P."/>
            <person name="Lefranc G."/>
        </authorList>
    </citation>
    <scope>NOMENCLATURE</scope>
</reference>
<reference key="9">
    <citation type="journal article" date="2009" name="Immunogenetics">
        <title>A clonotype nomenclature for T cell receptors.</title>
        <authorList>
            <person name="Yassai M.B."/>
            <person name="Naumov Y.N."/>
            <person name="Naumova E.N."/>
            <person name="Gorski J."/>
        </authorList>
    </citation>
    <scope>NOMENCLATURE</scope>
</reference>
<reference key="10">
    <citation type="journal article" date="2003" name="Nat. Immunol.">
        <title>A structural basis for immunodominant human T cell receptor recognition.</title>
        <authorList>
            <person name="Stewart-Jones G.B.E."/>
            <person name="McMichael A.J."/>
            <person name="Bell J.I."/>
            <person name="Stuart D.I."/>
            <person name="Jones E.Y."/>
        </authorList>
    </citation>
    <scope>X-RAY CRYSTALLOGRAPHY (1.40 ANGSTROMS) OF 19-219</scope>
    <scope>INTERACTION WITH PEPTIDE-HLA-A*02-B2M</scope>
    <scope>FUNCTION</scope>
    <scope>DOMAIN</scope>
    <scope>VARIANT ALA-110</scope>
</reference>
<reference key="11">
    <citation type="journal article" date="2008" name="Immunity">
        <title>The structural dynamics and energetics of an immunodominant T cell receptor are programmed by its Vbeta domain.</title>
        <authorList>
            <person name="Ishizuka J."/>
            <person name="Stewart-Jones G.B."/>
            <person name="van der Merwe A."/>
            <person name="Bell J.I."/>
            <person name="McMichael A.J."/>
            <person name="Jones E.Y."/>
        </authorList>
    </citation>
    <scope>X-RAY CRYSTALLOGRAPHY (1.60 ANGSTROMS) OF 20-217</scope>
    <scope>INTERACTION WITH PEPTIDE-HLA-A*02-B2M</scope>
    <scope>FUNCTION</scope>
    <scope>MUTAGENESIS OF SER-48; SER-49 AND GLN-51</scope>
    <scope>DOMAIN</scope>
    <scope>VARIANT ALA-110</scope>
</reference>
<reference key="12">
    <citation type="journal article" date="2016" name="Proc. Natl. Acad. Sci. U.S.A.">
        <title>Molecular basis for universal HLA-A*0201-restricted CD8+ T-cell immunity against influenza viruses.</title>
        <authorList>
            <person name="Valkenburg S.A."/>
            <person name="Josephs T.M."/>
            <person name="Clemens E.B."/>
            <person name="Grant E.J."/>
            <person name="Nguyen T.H."/>
            <person name="Wang G.C."/>
            <person name="Price D.A."/>
            <person name="Miller A."/>
            <person name="Tong S.Y."/>
            <person name="Thomas P.G."/>
            <person name="Doherty P.C."/>
            <person name="Rossjohn J."/>
            <person name="Gras S."/>
            <person name="Kedzierska K."/>
        </authorList>
    </citation>
    <scope>X-RAY CRYSTALLOGRAPHY (2.50 ANGSTROMS) OF 20-217</scope>
    <scope>FUNCTION</scope>
    <scope>INTERACTION WITH PEPTIDE-HLA-A*02-B2M</scope>
    <scope>DISULFIDE BOND</scope>
    <scope>TISSUE SPECIFICITY</scope>
    <scope>DOMAIN</scope>
    <scope>VARIANT ALA-110</scope>
</reference>
<name>TRAR1_HUMAN</name>
<comment type="function">
    <text evidence="1 5 6 7 8 9 10">The alpha chain of TRAV27*01J42*01C*01/TRBV19*01J2S7*01C*02 alpha-beta T cell receptor (TR) clonotype that is specific for HLA-A*02:01-restricted M/matrix protein 1 immunodominant epitope GILGFVFTL of influenza A virus (IAV). Classified as a public TR clonotype, it is preferentially selected in effector memory CD8-positive T cells among multiple HLA-A*02:01 carriers and confers long-lived immunity against IAV infection. Can cross-recognize sporadically emerging IAV variants by molecular mimicry, inducing immunity toward different influenza strains (PubMed:12796775, PubMed:18275829, PubMed:1833769, PubMed:27036003, PubMed:29997621, PubMed:7807026). Antigen recognition initiates TR-CD3 clustering on the cell surface and intracellular activation of LCK that phosphorylates the ITAM motifs of CD3G, CD3D, CD3E and CD247 enabling the recruitment of ZAP70. In turn, ZAP70 phosphorylates LAT, which recruits numerous signaling molecules to form the LAT signalosome. The LAT signalosome propagates signal branching to three major signaling pathways, the calcium, the mitogen-activated protein kinase (MAPK) kinase and the nuclear factor NF-kappa-B (NF-kB) pathways, leading to the mobilization of transcription factors that are critical for gene expression and essential for T cell differentiation into effector/memory T cells (By similarity).</text>
</comment>
<comment type="subunit">
    <text evidence="1 5 6 8">Disulfide-linked heterodimer with TRBV19*01J2S7*01C*02 beta chain. The TR primarily interacts via its CDR3-beta domain with M/matrix protein 1-derived peptide (GILGFVFTL) displayed by HLA-A*02.01 in a 'peg-notch' recognition mode (PubMed:12796775, PubMed:18275829, PubMed:27036003). The alpha-beta TR associates with the transmembrane signaling CD3 coreceptor proteins to form the TR-CD3 (TCR). The assembly of alpha-beta TR heterodimers with CD3 occurs in the endoplasmic reticulum where a single alpha-beta TR heterodimer associates with one CD3D-CD3E heterodimer, one CD3G-CD3E heterodimer and one CD247 homodimer forming a stable octameric structure. CD3D-CD3E and CD3G-CD3E heterodimers preferentially associate with TR alpha and TR beta chains (via TM domain), respectively. The association of the CD247 homodimer is the last step of TCR assembly in the endoplasmic reticulum and is required for transport to the cell surface (By similarity).</text>
</comment>
<comment type="subcellular location">
    <subcellularLocation>
        <location evidence="9">Cell membrane</location>
    </subcellularLocation>
</comment>
<comment type="tissue specificity">
    <text evidence="8 9">Expressed in M/matrix protein 1-specific effector and memory CD8-positive T cells readily detectable in the peripheral blood, secondary lymphoid organs and lung (primary site of infection) of IAV infected individuals.</text>
</comment>
<comment type="domain">
    <text evidence="5 6 8 13">The complementarity-determining region CDR1 confers specificity to the peptide antigen. Assumes a loop structure that makes contact with HLA-A*02.01 and contributes to the stability of the TR through interaction with CDR3-beta loop.</text>
</comment>
<comment type="domain">
    <text evidence="5 8 13">The complementarity-determining region CDR2 confers specificity to the peptide antigen. Assumes a loop structure that recognizes the peptide-HLA-A*02-B2M complex.</text>
</comment>
<comment type="domain">
    <text evidence="5 7 8 9 10">The complementarity-determining region CDR3 confers specificity to the peptide antigen. Assumes a loop structure that recognizes the peptide-HLA-A*02-B2M complex.</text>
</comment>
<comment type="domain">
    <text evidence="1">The connecting peptide (CP) domain contributes to the TR-CD3 assembly and signal transduction.</text>
</comment>
<comment type="domain">
    <text evidence="1">The TM domain mediates the interaction with the CD3 subunits.</text>
</comment>
<comment type="miscellaneous">
    <text evidence="15 16 17 20">The JM22 clone described as a variant of the public clonotype differs by one amino acid in the CDR3-alpha domain.</text>
</comment>
<comment type="caution">
    <text evidence="7 8 9">This sequence is an example of a full-length TR alpha chain. M/matrix protein 1-specific TRAV27*01J42*01C*01 TR alpha chain is generated by somatic recombination of variable TRAV27 (AC A0A087WT01) and joining TRAJ42 (AC A0A075B6Y9) gene segments spliced to constant TRAC (AC P01848) gene segment.</text>
</comment>
<comment type="sequence caution" evidence="12">
    <conflict type="miscellaneous discrepancy">
        <sequence resource="EMBL-CDS" id="CAA26435"/>
    </conflict>
    <text>Chimeric mRNA corresponding to regions V, J and C of T cell receptor (TR) alpha chain.</text>
</comment>
<accession>P0DSE1</accession>
<proteinExistence type="evidence at protein level"/>
<protein>
    <recommendedName>
        <fullName evidence="18">M1-specific T cell receptor alpha chain</fullName>
    </recommendedName>
    <alternativeName>
        <fullName evidence="11 18">TR alpha chain TRAV27*01J42*01C*01</fullName>
    </alternativeName>
</protein>
<evidence type="ECO:0000250" key="1">
    <source>
        <dbReference type="UniProtKB" id="P01848"/>
    </source>
</evidence>
<evidence type="ECO:0000255" key="2"/>
<evidence type="ECO:0000255" key="3">
    <source>
        <dbReference type="PROSITE-ProRule" id="PRU00114"/>
    </source>
</evidence>
<evidence type="ECO:0000255" key="4">
    <source>
        <dbReference type="PROSITE-ProRule" id="PRU00498"/>
    </source>
</evidence>
<evidence type="ECO:0000269" key="5">
    <source>
    </source>
</evidence>
<evidence type="ECO:0000269" key="6">
    <source>
    </source>
</evidence>
<evidence type="ECO:0000269" key="7">
    <source>
    </source>
</evidence>
<evidence type="ECO:0000269" key="8">
    <source>
    </source>
</evidence>
<evidence type="ECO:0000269" key="9">
    <source>
    </source>
</evidence>
<evidence type="ECO:0000269" key="10">
    <source>
    </source>
</evidence>
<evidence type="ECO:0000303" key="11">
    <source>
    </source>
</evidence>
<evidence type="ECO:0000305" key="12"/>
<evidence type="ECO:0000305" key="13">
    <source>
    </source>
</evidence>
<evidence type="ECO:0000305" key="14">
    <source>
    </source>
</evidence>
<evidence type="ECO:0000305" key="15">
    <source>
    </source>
</evidence>
<evidence type="ECO:0000305" key="16">
    <source>
    </source>
</evidence>
<evidence type="ECO:0000305" key="17">
    <source>
    </source>
</evidence>
<evidence type="ECO:0000305" key="18">
    <source>
    </source>
</evidence>
<evidence type="ECO:0000305" key="19">
    <source>
    </source>
</evidence>
<evidence type="ECO:0000305" key="20">
    <source>
    </source>
</evidence>
<evidence type="ECO:0000312" key="21">
    <source>
        <dbReference type="HGNC" id="HGNC:12027"/>
    </source>
</evidence>
<sequence length="268" mass="29608">MVLKFSVSILWIQLAWVSTQLLEQSPQFLSIQEGENLTVYCNSSSVFSSLQWYRQEPGEGPVLLVTVVTGGEVKKLKRLTFQFGDARKDSSLHITAAQPGDTGLYLCAGGGSQGNLIFGKGTKLSVKPIQNPDPAVYQLRDSKSSDKSVCLFTDFDSQTNVSQSKDSDVYITDKTVLDMRSMDFKSNSAVAWSNKSDFACANAFNNSIIPEDTFFPSPESSCDVKLVEKSFETDTNLNFQNLSVIGFRILLLKVAGFNLLMTLRLWSS</sequence>